<comment type="function">
    <text evidence="1">Removes the pyruvyl group from chorismate, with concomitant aromatization of the ring, to provide 4-hydroxybenzoate (4HB) for the ubiquinone pathway.</text>
</comment>
<comment type="catalytic activity">
    <reaction evidence="1">
        <text>chorismate = 4-hydroxybenzoate + pyruvate</text>
        <dbReference type="Rhea" id="RHEA:16505"/>
        <dbReference type="ChEBI" id="CHEBI:15361"/>
        <dbReference type="ChEBI" id="CHEBI:17879"/>
        <dbReference type="ChEBI" id="CHEBI:29748"/>
        <dbReference type="EC" id="4.1.3.40"/>
    </reaction>
</comment>
<comment type="pathway">
    <text evidence="1">Cofactor biosynthesis; ubiquinone biosynthesis.</text>
</comment>
<comment type="subcellular location">
    <subcellularLocation>
        <location evidence="1">Cytoplasm</location>
    </subcellularLocation>
</comment>
<comment type="similarity">
    <text evidence="1">Belongs to the UbiC family.</text>
</comment>
<reference key="1">
    <citation type="journal article" date="2004" name="Proc. Natl. Acad. Sci. U.S.A.">
        <title>Structural flexibility in the Burkholderia mallei genome.</title>
        <authorList>
            <person name="Nierman W.C."/>
            <person name="DeShazer D."/>
            <person name="Kim H.S."/>
            <person name="Tettelin H."/>
            <person name="Nelson K.E."/>
            <person name="Feldblyum T.V."/>
            <person name="Ulrich R.L."/>
            <person name="Ronning C.M."/>
            <person name="Brinkac L.M."/>
            <person name="Daugherty S.C."/>
            <person name="Davidsen T.D."/>
            <person name="DeBoy R.T."/>
            <person name="Dimitrov G."/>
            <person name="Dodson R.J."/>
            <person name="Durkin A.S."/>
            <person name="Gwinn M.L."/>
            <person name="Haft D.H."/>
            <person name="Khouri H.M."/>
            <person name="Kolonay J.F."/>
            <person name="Madupu R."/>
            <person name="Mohammoud Y."/>
            <person name="Nelson W.C."/>
            <person name="Radune D."/>
            <person name="Romero C.M."/>
            <person name="Sarria S."/>
            <person name="Selengut J."/>
            <person name="Shamblin C."/>
            <person name="Sullivan S.A."/>
            <person name="White O."/>
            <person name="Yu Y."/>
            <person name="Zafar N."/>
            <person name="Zhou L."/>
            <person name="Fraser C.M."/>
        </authorList>
    </citation>
    <scope>NUCLEOTIDE SEQUENCE [LARGE SCALE GENOMIC DNA]</scope>
    <source>
        <strain>ATCC 23344</strain>
    </source>
</reference>
<organism>
    <name type="scientific">Burkholderia mallei (strain ATCC 23344)</name>
    <dbReference type="NCBI Taxonomy" id="243160"/>
    <lineage>
        <taxon>Bacteria</taxon>
        <taxon>Pseudomonadati</taxon>
        <taxon>Pseudomonadota</taxon>
        <taxon>Betaproteobacteria</taxon>
        <taxon>Burkholderiales</taxon>
        <taxon>Burkholderiaceae</taxon>
        <taxon>Burkholderia</taxon>
        <taxon>pseudomallei group</taxon>
    </lineage>
</organism>
<name>UBIC_BURMA</name>
<protein>
    <recommendedName>
        <fullName evidence="1">Probable chorismate pyruvate-lyase</fullName>
        <shortName evidence="1">CL</shortName>
        <shortName evidence="1">CPL</shortName>
        <ecNumber evidence="1">4.1.3.40</ecNumber>
    </recommendedName>
</protein>
<proteinExistence type="inferred from homology"/>
<dbReference type="EC" id="4.1.3.40" evidence="1"/>
<dbReference type="EMBL" id="CP000010">
    <property type="protein sequence ID" value="AAU49907.1"/>
    <property type="molecule type" value="Genomic_DNA"/>
</dbReference>
<dbReference type="RefSeq" id="YP_103538.1">
    <property type="nucleotide sequence ID" value="NC_006348.1"/>
</dbReference>
<dbReference type="SMR" id="Q62ID2"/>
<dbReference type="KEGG" id="bma:BMA1946"/>
<dbReference type="PATRIC" id="fig|243160.12.peg.2013"/>
<dbReference type="eggNOG" id="COG3161">
    <property type="taxonomic scope" value="Bacteria"/>
</dbReference>
<dbReference type="HOGENOM" id="CLU_096824_0_0_4"/>
<dbReference type="UniPathway" id="UPA00232"/>
<dbReference type="Proteomes" id="UP000006693">
    <property type="component" value="Chromosome 1"/>
</dbReference>
<dbReference type="GO" id="GO:0005829">
    <property type="term" value="C:cytosol"/>
    <property type="evidence" value="ECO:0007669"/>
    <property type="project" value="TreeGrafter"/>
</dbReference>
<dbReference type="GO" id="GO:0008813">
    <property type="term" value="F:chorismate lyase activity"/>
    <property type="evidence" value="ECO:0007669"/>
    <property type="project" value="UniProtKB-UniRule"/>
</dbReference>
<dbReference type="GO" id="GO:0042866">
    <property type="term" value="P:pyruvate biosynthetic process"/>
    <property type="evidence" value="ECO:0007669"/>
    <property type="project" value="UniProtKB-UniRule"/>
</dbReference>
<dbReference type="GO" id="GO:0006744">
    <property type="term" value="P:ubiquinone biosynthetic process"/>
    <property type="evidence" value="ECO:0007669"/>
    <property type="project" value="UniProtKB-UniRule"/>
</dbReference>
<dbReference type="Gene3D" id="3.40.1410.10">
    <property type="entry name" value="Chorismate lyase-like"/>
    <property type="match status" value="1"/>
</dbReference>
<dbReference type="HAMAP" id="MF_01632">
    <property type="entry name" value="UbiC"/>
    <property type="match status" value="1"/>
</dbReference>
<dbReference type="InterPro" id="IPR007440">
    <property type="entry name" value="Chorismate--pyruvate_lyase"/>
</dbReference>
<dbReference type="InterPro" id="IPR028978">
    <property type="entry name" value="Chorismate_lyase_/UTRA_dom_sf"/>
</dbReference>
<dbReference type="PANTHER" id="PTHR38683">
    <property type="entry name" value="CHORISMATE PYRUVATE-LYASE"/>
    <property type="match status" value="1"/>
</dbReference>
<dbReference type="PANTHER" id="PTHR38683:SF1">
    <property type="entry name" value="CHORISMATE PYRUVATE-LYASE"/>
    <property type="match status" value="1"/>
</dbReference>
<dbReference type="Pfam" id="PF04345">
    <property type="entry name" value="Chor_lyase"/>
    <property type="match status" value="1"/>
</dbReference>
<dbReference type="SUPFAM" id="SSF64288">
    <property type="entry name" value="Chorismate lyase-like"/>
    <property type="match status" value="1"/>
</dbReference>
<keyword id="KW-0963">Cytoplasm</keyword>
<keyword id="KW-0456">Lyase</keyword>
<keyword id="KW-0670">Pyruvate</keyword>
<keyword id="KW-1185">Reference proteome</keyword>
<keyword id="KW-0831">Ubiquinone biosynthesis</keyword>
<gene>
    <name evidence="1" type="primary">ubiC</name>
    <name type="ordered locus">BMA1946</name>
</gene>
<sequence length="197" mass="21770">MRFDAADAHWRETPRPGASSAQKDWLTRGGSLTAHLARLGRVTVRVTRETVAAPWADEHRALSCASRAPVWVREVVLAVDGAPFVAAHSIAPLAASKGVWQAMRRLRTRPLAELLYSDPEVTRSALVSRRVLAGHPLFSLASLALARAYATEHAFAARRSVFERRGTPLMVTECMLPALWRHLDAHGERRARGLEQT</sequence>
<feature type="chain" id="PRO_0000240537" description="Probable chorismate pyruvate-lyase">
    <location>
        <begin position="1"/>
        <end position="197"/>
    </location>
</feature>
<feature type="region of interest" description="Disordered" evidence="2">
    <location>
        <begin position="1"/>
        <end position="23"/>
    </location>
</feature>
<feature type="compositionally biased region" description="Basic and acidic residues" evidence="2">
    <location>
        <begin position="1"/>
        <end position="14"/>
    </location>
</feature>
<feature type="binding site" evidence="1">
    <location>
        <position position="73"/>
    </location>
    <ligand>
        <name>substrate</name>
    </ligand>
</feature>
<feature type="binding site" evidence="1">
    <location>
        <position position="111"/>
    </location>
    <ligand>
        <name>substrate</name>
    </ligand>
</feature>
<feature type="binding site" evidence="1">
    <location>
        <position position="173"/>
    </location>
    <ligand>
        <name>substrate</name>
    </ligand>
</feature>
<accession>Q62ID2</accession>
<evidence type="ECO:0000255" key="1">
    <source>
        <dbReference type="HAMAP-Rule" id="MF_01632"/>
    </source>
</evidence>
<evidence type="ECO:0000256" key="2">
    <source>
        <dbReference type="SAM" id="MobiDB-lite"/>
    </source>
</evidence>